<proteinExistence type="evidence at transcript level"/>
<name>MRTFA_XENLA</name>
<keyword id="KW-0009">Actin-binding</keyword>
<keyword id="KW-0175">Coiled coil</keyword>
<keyword id="KW-0963">Cytoplasm</keyword>
<keyword id="KW-0539">Nucleus</keyword>
<keyword id="KW-1185">Reference proteome</keyword>
<keyword id="KW-0677">Repeat</keyword>
<keyword id="KW-0804">Transcription</keyword>
<keyword id="KW-0805">Transcription regulation</keyword>
<dbReference type="EMBL" id="AF532599">
    <property type="protein sequence ID" value="AAN33043.1"/>
    <property type="molecule type" value="mRNA"/>
</dbReference>
<dbReference type="SMR" id="Q8AYC2"/>
<dbReference type="AGR" id="Xenbase:XB-GENE-865649"/>
<dbReference type="Xenbase" id="XB-GENE-865649">
    <property type="gene designation" value="mrtfa.S"/>
</dbReference>
<dbReference type="Proteomes" id="UP000186698">
    <property type="component" value="Unplaced"/>
</dbReference>
<dbReference type="GO" id="GO:0005737">
    <property type="term" value="C:cytoplasm"/>
    <property type="evidence" value="ECO:0000250"/>
    <property type="project" value="UniProtKB"/>
</dbReference>
<dbReference type="GO" id="GO:0005634">
    <property type="term" value="C:nucleus"/>
    <property type="evidence" value="ECO:0000250"/>
    <property type="project" value="UniProtKB"/>
</dbReference>
<dbReference type="GO" id="GO:0003779">
    <property type="term" value="F:actin binding"/>
    <property type="evidence" value="ECO:0000250"/>
    <property type="project" value="UniProtKB"/>
</dbReference>
<dbReference type="GO" id="GO:0003785">
    <property type="term" value="F:actin monomer binding"/>
    <property type="evidence" value="ECO:0000250"/>
    <property type="project" value="UniProtKB"/>
</dbReference>
<dbReference type="GO" id="GO:0003713">
    <property type="term" value="F:transcription coactivator activity"/>
    <property type="evidence" value="ECO:0000250"/>
    <property type="project" value="UniProtKB"/>
</dbReference>
<dbReference type="GO" id="GO:0030036">
    <property type="term" value="P:actin cytoskeleton organization"/>
    <property type="evidence" value="ECO:0000250"/>
    <property type="project" value="UniProtKB"/>
</dbReference>
<dbReference type="GO" id="GO:0045944">
    <property type="term" value="P:positive regulation of transcription by RNA polymerase II"/>
    <property type="evidence" value="ECO:0000250"/>
    <property type="project" value="UniProtKB"/>
</dbReference>
<dbReference type="GO" id="GO:0051145">
    <property type="term" value="P:smooth muscle cell differentiation"/>
    <property type="evidence" value="ECO:0000318"/>
    <property type="project" value="GO_Central"/>
</dbReference>
<dbReference type="FunFam" id="1.10.720.30:FF:000002">
    <property type="entry name" value="Myocardin related transcription factor A"/>
    <property type="match status" value="1"/>
</dbReference>
<dbReference type="Gene3D" id="6.10.140.2040">
    <property type="match status" value="1"/>
</dbReference>
<dbReference type="Gene3D" id="6.10.150.10">
    <property type="match status" value="1"/>
</dbReference>
<dbReference type="Gene3D" id="1.10.720.30">
    <property type="entry name" value="SAP domain"/>
    <property type="match status" value="1"/>
</dbReference>
<dbReference type="InterPro" id="IPR043451">
    <property type="entry name" value="Myocardin-like"/>
</dbReference>
<dbReference type="InterPro" id="IPR004018">
    <property type="entry name" value="RPEL_repeat"/>
</dbReference>
<dbReference type="InterPro" id="IPR003034">
    <property type="entry name" value="SAP_dom"/>
</dbReference>
<dbReference type="InterPro" id="IPR036361">
    <property type="entry name" value="SAP_dom_sf"/>
</dbReference>
<dbReference type="PANTHER" id="PTHR22793:SF6">
    <property type="entry name" value="MYOCARDIN-RELATED TRANSCRIPTION FACTOR A"/>
    <property type="match status" value="1"/>
</dbReference>
<dbReference type="PANTHER" id="PTHR22793">
    <property type="entry name" value="MYOCARDIN-RELATED TRANSCRIPTION FACTOR-RELATED"/>
    <property type="match status" value="1"/>
</dbReference>
<dbReference type="Pfam" id="PF02755">
    <property type="entry name" value="RPEL"/>
    <property type="match status" value="3"/>
</dbReference>
<dbReference type="Pfam" id="PF02037">
    <property type="entry name" value="SAP"/>
    <property type="match status" value="1"/>
</dbReference>
<dbReference type="SMART" id="SM00707">
    <property type="entry name" value="RPEL"/>
    <property type="match status" value="3"/>
</dbReference>
<dbReference type="SMART" id="SM00513">
    <property type="entry name" value="SAP"/>
    <property type="match status" value="1"/>
</dbReference>
<dbReference type="SUPFAM" id="SSF68906">
    <property type="entry name" value="SAP domain"/>
    <property type="match status" value="1"/>
</dbReference>
<dbReference type="PROSITE" id="PS51073">
    <property type="entry name" value="RPEL"/>
    <property type="match status" value="3"/>
</dbReference>
<dbReference type="PROSITE" id="PS50800">
    <property type="entry name" value="SAP"/>
    <property type="match status" value="1"/>
</dbReference>
<comment type="function">
    <text evidence="1">Transcription coactivator that associates with the serum response factor (srf) transcription factor to control expression of genes regulating the cytoskeleton during development, morphogenesis and cell migration. The srf-mrtfa complex activity responds to Rho GTPase-induced changes in cellular globular actin (G-actin) concentration, thereby coupling cytoskeletal gene expression to cytoskeletal dynamics. Mrtfa binds G-actin via its RPEL repeats, regulating activity of the mrtfa-srf complex. Activity is also regulated by filamentous actin (F-actin) in the nucleus.</text>
</comment>
<comment type="subunit">
    <text evidence="1">Interacts with srf, forming the srf-mrtfa nuclear complex which binds the 5'-CArG-3' consensus motif (CArG box) on DNA via srf. Interacts (via RPEL repeats) with globular actin (G-actin), thereby regulating its subcellular location and activity of the complex formed with srf.</text>
</comment>
<comment type="subcellular location">
    <subcellularLocation>
        <location evidence="1">Cytoplasm</location>
    </subcellularLocation>
    <subcellularLocation>
        <location evidence="1">Nucleus</location>
    </subcellularLocation>
    <text evidence="1">Subcellular location is tightly regulated by actin both in cytoplasm and nucleus: high levels of G-actin in the nucleus observed during serum deprivation lead to low levels of nuclear mrtfa, while reduced levels of nuclear G-actin result in accumulation of mrtfa in the nucleus.</text>
</comment>
<comment type="domain">
    <text evidence="1">The N-terminal region is required for nuclear localization and the C-terminal region mediates transcriptional activity.</text>
</comment>
<comment type="domain">
    <text evidence="1">The RPEL repeats mediate binding to globular actin (G-actin); each RPEL repeat-binding to one G-actin monomer. In addition, each intervening spacer sequence region can bind one G-actin monomer, to reach a pentavalent complex.</text>
</comment>
<organism>
    <name type="scientific">Xenopus laevis</name>
    <name type="common">African clawed frog</name>
    <dbReference type="NCBI Taxonomy" id="8355"/>
    <lineage>
        <taxon>Eukaryota</taxon>
        <taxon>Metazoa</taxon>
        <taxon>Chordata</taxon>
        <taxon>Craniata</taxon>
        <taxon>Vertebrata</taxon>
        <taxon>Euteleostomi</taxon>
        <taxon>Amphibia</taxon>
        <taxon>Batrachia</taxon>
        <taxon>Anura</taxon>
        <taxon>Pipoidea</taxon>
        <taxon>Pipidae</taxon>
        <taxon>Xenopodinae</taxon>
        <taxon>Xenopus</taxon>
        <taxon>Xenopus</taxon>
    </lineage>
</organism>
<protein>
    <recommendedName>
        <fullName>Myocardin-related transcription factor A</fullName>
        <shortName>MRTF-A</shortName>
    </recommendedName>
    <alternativeName>
        <fullName>MKL/myocardin-like protein 1</fullName>
    </alternativeName>
    <alternativeName>
        <fullName>Megakaryoblastic leukemia 1 protein</fullName>
    </alternativeName>
</protein>
<accession>Q8AYC2</accession>
<reference key="1">
    <citation type="journal article" date="2002" name="Proc. Natl. Acad. Sci. U.S.A.">
        <title>Potentiation of serum response factor activity by a family of myocardin-related transcription factors.</title>
        <authorList>
            <person name="Wang D.-Z."/>
            <person name="Li S."/>
            <person name="Hockemeyer D."/>
            <person name="Sutherland L."/>
            <person name="Wang Z."/>
            <person name="Schratt G."/>
            <person name="Richardson J.A."/>
            <person name="Nordheim A."/>
            <person name="Olson E.N."/>
        </authorList>
    </citation>
    <scope>NUCLEOTIDE SEQUENCE [MRNA]</scope>
</reference>
<gene>
    <name type="primary">mrtfa</name>
    <name type="synonym">mkl1</name>
</gene>
<sequence>MTLLDTEQALLAIHTVLQLKLQQRRTREELENQGIMPPLKSPAAFHEQRRSLERARTEDYLKRKIRSRPERAELVRMHILEETSAEPSLQAKQIKLKRARLADDLNEKISQRPGPMELVVKNILPVETSLKEVIIDVDYPEVVDNSSFDEDSSDALSPEQPASQESQGSIPSPIENRPSETTQIPALSPSHAFSCVQFGTDAFNQDSLQSTAITISNGLTASICKSLPALVKQSQPKPSFEKSQRIKKPKEPKPKVKKLKYHQYIPPDQKQKGTPAMDSSYAKLLQQQQLFLQLQIINQQQHQHYNYQTILPAPPKPLPDQQNTNSSSTTTVRSMSTVAPSTLATPTITRQNSNVAVGGRTGPLPHNLDEMKVAELKLELKHRGLPVSGTKIDLIERLKASQDPSTATAASAKPTPVQQAKPPEVVPIVSSSCLTTREPIKLCSTSSTPPGSPCPSEVSVVSMDEVSMISDALGETVACPVTQQVQQNPAAEKSPPDARDKDLMLREKDRQIEELTQRLKQKQELVERLRQQLEQEKRTPQHSTDDQQALILAVKQEPLPLTVDSINKKASSIVKQELNTAIICQQEPQLLIGPVSSGIEGKVDNSAGTKLVFTLTNPSSQLPEENRQIVLQKVPTPPSSLHPNNSLPKQEVLLSCCALQNQKPALQLVPGTVLSLSSSNLQPMLNMNGFQKWHGEALDSLQKQLVHNESPATPPQQPEPEPPPHSIFLTHSSPQWSKNPPGYDEAMKQQPNSCEDGRPGCLQAVDFFDVLIKNLDIPSEFKDYLVPCLKQTSPSHQAAQMVPQVEMAPPPSPIHSALGRLEDFLESSTGTPLLRGHQDGPSSMPLIDDLHSQMLSSLAILDHPPSPMDTSDLHFSPIGNSLGLDISEPPLDGMDWLELSEPPAMNLTPLSTFTPSVFSTDFLDSHDLHLHWDSCL</sequence>
<feature type="chain" id="PRO_0000126627" description="Myocardin-related transcription factor A">
    <location>
        <begin position="1"/>
        <end position="936"/>
    </location>
</feature>
<feature type="repeat" description="RPEL 1">
    <location>
        <begin position="15"/>
        <end position="40"/>
    </location>
</feature>
<feature type="repeat" description="RPEL 2">
    <location>
        <begin position="59"/>
        <end position="84"/>
    </location>
</feature>
<feature type="repeat" description="RPEL 3">
    <location>
        <begin position="103"/>
        <end position="128"/>
    </location>
</feature>
<feature type="domain" description="SAP" evidence="3">
    <location>
        <begin position="368"/>
        <end position="402"/>
    </location>
</feature>
<feature type="region of interest" description="Disordered" evidence="4">
    <location>
        <begin position="146"/>
        <end position="185"/>
    </location>
</feature>
<feature type="region of interest" description="Disordered" evidence="4">
    <location>
        <begin position="234"/>
        <end position="258"/>
    </location>
</feature>
<feature type="region of interest" description="Disordered" evidence="4">
    <location>
        <begin position="401"/>
        <end position="422"/>
    </location>
</feature>
<feature type="region of interest" description="Disordered" evidence="4">
    <location>
        <begin position="707"/>
        <end position="755"/>
    </location>
</feature>
<feature type="coiled-coil region" evidence="2">
    <location>
        <begin position="497"/>
        <end position="542"/>
    </location>
</feature>
<feature type="short sequence motif" description="Bipartite Nuclear localization signal" evidence="1">
    <location>
        <begin position="62"/>
        <end position="100"/>
    </location>
</feature>
<feature type="compositionally biased region" description="Polar residues" evidence="4">
    <location>
        <begin position="160"/>
        <end position="170"/>
    </location>
</feature>
<feature type="compositionally biased region" description="Basic and acidic residues" evidence="4">
    <location>
        <begin position="239"/>
        <end position="254"/>
    </location>
</feature>
<feature type="compositionally biased region" description="Low complexity" evidence="4">
    <location>
        <begin position="404"/>
        <end position="416"/>
    </location>
</feature>
<feature type="compositionally biased region" description="Pro residues" evidence="4">
    <location>
        <begin position="712"/>
        <end position="725"/>
    </location>
</feature>
<feature type="compositionally biased region" description="Polar residues" evidence="4">
    <location>
        <begin position="729"/>
        <end position="738"/>
    </location>
</feature>
<evidence type="ECO:0000250" key="1">
    <source>
        <dbReference type="UniProtKB" id="Q8K4J6"/>
    </source>
</evidence>
<evidence type="ECO:0000255" key="2"/>
<evidence type="ECO:0000255" key="3">
    <source>
        <dbReference type="PROSITE-ProRule" id="PRU00186"/>
    </source>
</evidence>
<evidence type="ECO:0000256" key="4">
    <source>
        <dbReference type="SAM" id="MobiDB-lite"/>
    </source>
</evidence>